<accession>P97776</accession>
<protein>
    <recommendedName>
        <fullName>Disintegrin and metalloproteinase domain-containing protein 18</fullName>
        <shortName>ADAM 18</shortName>
    </recommendedName>
    <alternativeName>
        <fullName>Transmembrane metalloproteinase-like, disintegrin-like, and cysteine-rich protein III</fullName>
        <shortName>tMDC III</shortName>
    </alternativeName>
</protein>
<keyword id="KW-0217">Developmental protein</keyword>
<keyword id="KW-0221">Differentiation</keyword>
<keyword id="KW-1015">Disulfide bond</keyword>
<keyword id="KW-0245">EGF-like domain</keyword>
<keyword id="KW-0325">Glycoprotein</keyword>
<keyword id="KW-0472">Membrane</keyword>
<keyword id="KW-1185">Reference proteome</keyword>
<keyword id="KW-0744">Spermatogenesis</keyword>
<keyword id="KW-0812">Transmembrane</keyword>
<keyword id="KW-1133">Transmembrane helix</keyword>
<organism>
    <name type="scientific">Rattus norvegicus</name>
    <name type="common">Rat</name>
    <dbReference type="NCBI Taxonomy" id="10116"/>
    <lineage>
        <taxon>Eukaryota</taxon>
        <taxon>Metazoa</taxon>
        <taxon>Chordata</taxon>
        <taxon>Craniata</taxon>
        <taxon>Vertebrata</taxon>
        <taxon>Euteleostomi</taxon>
        <taxon>Mammalia</taxon>
        <taxon>Eutheria</taxon>
        <taxon>Euarchontoglires</taxon>
        <taxon>Glires</taxon>
        <taxon>Rodentia</taxon>
        <taxon>Myomorpha</taxon>
        <taxon>Muroidea</taxon>
        <taxon>Muridae</taxon>
        <taxon>Murinae</taxon>
        <taxon>Rattus</taxon>
    </lineage>
</organism>
<reference key="1">
    <citation type="journal article" date="1997" name="Mol. Reprod. Dev.">
        <title>Rat MDC family of proteins: sequence analysis, tissue distribution, and expression in prepubertal and adult rat testis.</title>
        <authorList>
            <person name="Frayne J."/>
            <person name="Jury J.A."/>
            <person name="Barker H.L."/>
            <person name="Hall L."/>
        </authorList>
    </citation>
    <scope>NUCLEOTIDE SEQUENCE [MRNA]</scope>
    <source>
        <strain>Sprague-Dawley</strain>
        <tissue>Testis</tissue>
    </source>
</reference>
<gene>
    <name type="primary">Adam18</name>
    <name type="synonym">Tmdc3</name>
</gene>
<name>ADA18_RAT</name>
<evidence type="ECO:0000250" key="1"/>
<evidence type="ECO:0000255" key="2"/>
<evidence type="ECO:0000255" key="3">
    <source>
        <dbReference type="PROSITE-ProRule" id="PRU00068"/>
    </source>
</evidence>
<evidence type="ECO:0000255" key="4">
    <source>
        <dbReference type="PROSITE-ProRule" id="PRU00076"/>
    </source>
</evidence>
<evidence type="ECO:0000255" key="5">
    <source>
        <dbReference type="PROSITE-ProRule" id="PRU00276"/>
    </source>
</evidence>
<proteinExistence type="evidence at transcript level"/>
<sequence>IYRKHLKYIGATSPGELCNESYVAGVGTYPEDIGLEGLSMVITQLIGLHIGLTYDDVDNCSCPRAPCIMQPEALSSSGMKTFSNCSVHDYTHYASKLDMQCLGDLSNVLQPKQSVCGNGIVEGSEECDCGNETECQFKECCNHETCKLKGSAQCGSGTCCTPKCELSAAGTPCRKAVDPECDFTEYCDGSSSHCVPDTFALDGHLCRLGSAYCYNGRCQALNDQCVSLFGKGSQGASYACFEKVNSQRENLANCDSKNSYSLPCGQKDVLCGKLACFRPNKNYKSSTQSVLYSYVHGSVCLSIPPGLSMRSDGKDNAYVADGTVCGPQMYCINGSCKEVNFTGNDCNAAKKCKGNGICNNFGHCQCFPDYRPPDCNLQIGSPGGSIDDGNLLRTDSALATKRLSQHADSWVILGFFIFLPFIMTLFLGIIKRNERKIVPQKEQER</sequence>
<feature type="chain" id="PRO_0000078208" description="Disintegrin and metalloproteinase domain-containing protein 18">
    <location>
        <begin position="1" status="less than"/>
        <end position="445"/>
    </location>
</feature>
<feature type="topological domain" description="Extracellular" evidence="2">
    <location>
        <begin position="1" status="less than"/>
        <end position="409"/>
    </location>
</feature>
<feature type="transmembrane region" description="Helical" evidence="2">
    <location>
        <begin position="410"/>
        <end position="430"/>
    </location>
</feature>
<feature type="topological domain" description="Cytoplasmic" evidence="2">
    <location>
        <begin position="431"/>
        <end position="445"/>
    </location>
</feature>
<feature type="domain" description="Peptidase M12B" evidence="5">
    <location>
        <begin position="1" status="less than"/>
        <end position="106"/>
    </location>
</feature>
<feature type="domain" description="Disintegrin" evidence="3">
    <location>
        <begin position="113"/>
        <end position="202"/>
    </location>
</feature>
<feature type="domain" description="EGF-like" evidence="4">
    <location>
        <begin position="342"/>
        <end position="376"/>
    </location>
</feature>
<feature type="glycosylation site" description="N-linked (GlcNAc...) asparagine" evidence="2">
    <location>
        <position position="19"/>
    </location>
</feature>
<feature type="glycosylation site" description="N-linked (GlcNAc...) asparagine" evidence="2">
    <location>
        <position position="59"/>
    </location>
</feature>
<feature type="glycosylation site" description="N-linked (GlcNAc...) asparagine" evidence="2">
    <location>
        <position position="84"/>
    </location>
</feature>
<feature type="glycosylation site" description="N-linked (GlcNAc...) asparagine" evidence="2">
    <location>
        <position position="131"/>
    </location>
</feature>
<feature type="glycosylation site" description="N-linked (GlcNAc...) asparagine" evidence="2">
    <location>
        <position position="333"/>
    </location>
</feature>
<feature type="glycosylation site" description="N-linked (GlcNAc...) asparagine" evidence="2">
    <location>
        <position position="340"/>
    </location>
</feature>
<feature type="disulfide bond" evidence="1">
    <location>
        <begin position="18"/>
        <end position="101"/>
    </location>
</feature>
<feature type="disulfide bond" evidence="1">
    <location>
        <begin position="60"/>
        <end position="85"/>
    </location>
</feature>
<feature type="disulfide bond" evidence="1">
    <location>
        <begin position="62"/>
        <end position="67"/>
    </location>
</feature>
<feature type="disulfide bond" evidence="1">
    <location>
        <begin position="173"/>
        <end position="194"/>
    </location>
</feature>
<feature type="disulfide bond" evidence="1">
    <location>
        <begin position="346"/>
        <end position="358"/>
    </location>
</feature>
<feature type="disulfide bond" evidence="1">
    <location>
        <begin position="352"/>
        <end position="364"/>
    </location>
</feature>
<feature type="disulfide bond" evidence="1">
    <location>
        <begin position="366"/>
        <end position="375"/>
    </location>
</feature>
<feature type="non-terminal residue">
    <location>
        <position position="1"/>
    </location>
</feature>
<comment type="function">
    <text evidence="1">Sperm surface membrane protein that may be involved in spermatogenesis and fertilization. This is a non catalytic metalloprotease-like protein (By similarity).</text>
</comment>
<comment type="subcellular location">
    <subcellularLocation>
        <location>Membrane</location>
        <topology>Single-pass type I membrane protein</topology>
    </subcellularLocation>
</comment>
<comment type="tissue specificity">
    <text>Expressed specifically in testis.</text>
</comment>
<comment type="developmental stage">
    <text>Adult levels are reached by day 28 after birth.</text>
</comment>
<comment type="domain">
    <text evidence="1">A tripeptide motif (ECD) within disintegrin-like domain could be involved in the binding to egg integrin receptor and thus could mediate sperm/egg binding.</text>
</comment>
<comment type="PTM">
    <text evidence="1">The prodomain and the metalloprotease-like domain are cleaved during the epididymal maturation of the spermatozoa.</text>
</comment>
<dbReference type="EMBL" id="Y11490">
    <property type="protein sequence ID" value="CAA72276.1"/>
    <property type="molecule type" value="mRNA"/>
</dbReference>
<dbReference type="SMR" id="P97776"/>
<dbReference type="FunCoup" id="P97776">
    <property type="interactions" value="2"/>
</dbReference>
<dbReference type="STRING" id="10116.ENSRNOP00000023805"/>
<dbReference type="MEROPS" id="M12.958"/>
<dbReference type="GlyCosmos" id="P97776">
    <property type="glycosylation" value="6 sites, No reported glycans"/>
</dbReference>
<dbReference type="GlyGen" id="P97776">
    <property type="glycosylation" value="6 sites"/>
</dbReference>
<dbReference type="PhosphoSitePlus" id="P97776"/>
<dbReference type="PaxDb" id="10116-ENSRNOP00000023805"/>
<dbReference type="UCSC" id="RGD:620405">
    <property type="organism name" value="rat"/>
</dbReference>
<dbReference type="AGR" id="RGD:620405"/>
<dbReference type="RGD" id="620405">
    <property type="gene designation" value="Adam18"/>
</dbReference>
<dbReference type="eggNOG" id="KOG3607">
    <property type="taxonomic scope" value="Eukaryota"/>
</dbReference>
<dbReference type="InParanoid" id="P97776"/>
<dbReference type="PhylomeDB" id="P97776"/>
<dbReference type="Proteomes" id="UP000002494">
    <property type="component" value="Unplaced"/>
</dbReference>
<dbReference type="GO" id="GO:0016020">
    <property type="term" value="C:membrane"/>
    <property type="evidence" value="ECO:0007669"/>
    <property type="project" value="UniProtKB-SubCell"/>
</dbReference>
<dbReference type="GO" id="GO:0004222">
    <property type="term" value="F:metalloendopeptidase activity"/>
    <property type="evidence" value="ECO:0007669"/>
    <property type="project" value="InterPro"/>
</dbReference>
<dbReference type="GO" id="GO:0030154">
    <property type="term" value="P:cell differentiation"/>
    <property type="evidence" value="ECO:0007669"/>
    <property type="project" value="UniProtKB-KW"/>
</dbReference>
<dbReference type="GO" id="GO:0006508">
    <property type="term" value="P:proteolysis"/>
    <property type="evidence" value="ECO:0007669"/>
    <property type="project" value="InterPro"/>
</dbReference>
<dbReference type="GO" id="GO:0007283">
    <property type="term" value="P:spermatogenesis"/>
    <property type="evidence" value="ECO:0007669"/>
    <property type="project" value="UniProtKB-KW"/>
</dbReference>
<dbReference type="FunFam" id="4.10.70.10:FF:000001">
    <property type="entry name" value="Disintegrin and metalloproteinase domain-containing protein 22"/>
    <property type="match status" value="1"/>
</dbReference>
<dbReference type="Gene3D" id="3.40.390.10">
    <property type="entry name" value="Collagenase (Catalytic Domain)"/>
    <property type="match status" value="1"/>
</dbReference>
<dbReference type="Gene3D" id="4.10.70.10">
    <property type="entry name" value="Disintegrin domain"/>
    <property type="match status" value="1"/>
</dbReference>
<dbReference type="InterPro" id="IPR006586">
    <property type="entry name" value="ADAM_Cys-rich"/>
</dbReference>
<dbReference type="InterPro" id="IPR018358">
    <property type="entry name" value="Disintegrin_CS"/>
</dbReference>
<dbReference type="InterPro" id="IPR001762">
    <property type="entry name" value="Disintegrin_dom"/>
</dbReference>
<dbReference type="InterPro" id="IPR036436">
    <property type="entry name" value="Disintegrin_dom_sf"/>
</dbReference>
<dbReference type="InterPro" id="IPR000742">
    <property type="entry name" value="EGF-like_dom"/>
</dbReference>
<dbReference type="InterPro" id="IPR024079">
    <property type="entry name" value="MetalloPept_cat_dom_sf"/>
</dbReference>
<dbReference type="InterPro" id="IPR001590">
    <property type="entry name" value="Peptidase_M12B"/>
</dbReference>
<dbReference type="PANTHER" id="PTHR11905">
    <property type="entry name" value="ADAM A DISINTEGRIN AND METALLOPROTEASE DOMAIN"/>
    <property type="match status" value="1"/>
</dbReference>
<dbReference type="PANTHER" id="PTHR11905:SF158">
    <property type="entry name" value="DISINTEGRIN AND METALLOPROTEINASE DOMAIN-CONTAINING PROTEIN 18"/>
    <property type="match status" value="1"/>
</dbReference>
<dbReference type="Pfam" id="PF08516">
    <property type="entry name" value="ADAM_CR"/>
    <property type="match status" value="1"/>
</dbReference>
<dbReference type="Pfam" id="PF00200">
    <property type="entry name" value="Disintegrin"/>
    <property type="match status" value="1"/>
</dbReference>
<dbReference type="Pfam" id="PF01421">
    <property type="entry name" value="Reprolysin"/>
    <property type="match status" value="1"/>
</dbReference>
<dbReference type="SMART" id="SM00608">
    <property type="entry name" value="ACR"/>
    <property type="match status" value="1"/>
</dbReference>
<dbReference type="SMART" id="SM00050">
    <property type="entry name" value="DISIN"/>
    <property type="match status" value="1"/>
</dbReference>
<dbReference type="SUPFAM" id="SSF57552">
    <property type="entry name" value="Blood coagulation inhibitor (disintegrin)"/>
    <property type="match status" value="1"/>
</dbReference>
<dbReference type="SUPFAM" id="SSF55486">
    <property type="entry name" value="Metalloproteases ('zincins'), catalytic domain"/>
    <property type="match status" value="1"/>
</dbReference>
<dbReference type="PROSITE" id="PS50215">
    <property type="entry name" value="ADAM_MEPRO"/>
    <property type="match status" value="1"/>
</dbReference>
<dbReference type="PROSITE" id="PS00427">
    <property type="entry name" value="DISINTEGRIN_1"/>
    <property type="match status" value="1"/>
</dbReference>
<dbReference type="PROSITE" id="PS50214">
    <property type="entry name" value="DISINTEGRIN_2"/>
    <property type="match status" value="1"/>
</dbReference>
<dbReference type="PROSITE" id="PS50026">
    <property type="entry name" value="EGF_3"/>
    <property type="match status" value="1"/>
</dbReference>